<protein>
    <recommendedName>
        <fullName>Acetyl-CoA decarbonylase/synthase complex subunit beta 2</fullName>
        <shortName>ACDS complex subunit beta 2</shortName>
        <ecNumber evidence="3">2.3.1.169</ecNumber>
    </recommendedName>
    <alternativeName>
        <fullName>ACDS complex acyltransferase 2</fullName>
    </alternativeName>
</protein>
<dbReference type="EC" id="2.3.1.169" evidence="3"/>
<dbReference type="EMBL" id="L77117">
    <property type="protein sequence ID" value="AAB98138.1"/>
    <property type="molecule type" value="Genomic_DNA"/>
</dbReference>
<dbReference type="PIR" id="E64319">
    <property type="entry name" value="E64319"/>
</dbReference>
<dbReference type="RefSeq" id="WP_010869651.1">
    <property type="nucleotide sequence ID" value="NC_000909.1"/>
</dbReference>
<dbReference type="SMR" id="Q57620"/>
<dbReference type="FunCoup" id="Q57620">
    <property type="interactions" value="90"/>
</dbReference>
<dbReference type="STRING" id="243232.MJ_0156"/>
<dbReference type="PaxDb" id="243232-MJ_0156"/>
<dbReference type="EnsemblBacteria" id="AAB98138">
    <property type="protein sequence ID" value="AAB98138"/>
    <property type="gene ID" value="MJ_0156"/>
</dbReference>
<dbReference type="GeneID" id="1451000"/>
<dbReference type="KEGG" id="mja:MJ_0156"/>
<dbReference type="eggNOG" id="arCOG04360">
    <property type="taxonomic scope" value="Archaea"/>
</dbReference>
<dbReference type="HOGENOM" id="CLU_613408_0_0_2"/>
<dbReference type="InParanoid" id="Q57620"/>
<dbReference type="OrthoDB" id="69951at2157"/>
<dbReference type="PhylomeDB" id="Q57620"/>
<dbReference type="Proteomes" id="UP000000805">
    <property type="component" value="Chromosome"/>
</dbReference>
<dbReference type="GO" id="GO:0016407">
    <property type="term" value="F:acetyltransferase activity"/>
    <property type="evidence" value="ECO:0007669"/>
    <property type="project" value="UniProtKB-UniRule"/>
</dbReference>
<dbReference type="GO" id="GO:0043885">
    <property type="term" value="F:anaerobic carbon-monoxide dehydrogenase activity"/>
    <property type="evidence" value="ECO:0007669"/>
    <property type="project" value="InterPro"/>
</dbReference>
<dbReference type="GO" id="GO:0043884">
    <property type="term" value="F:CO-methylating acetyl-CoA synthase activity"/>
    <property type="evidence" value="ECO:0007669"/>
    <property type="project" value="UniProtKB-EC"/>
</dbReference>
<dbReference type="GO" id="GO:0005506">
    <property type="term" value="F:iron ion binding"/>
    <property type="evidence" value="ECO:0007669"/>
    <property type="project" value="UniProtKB-UniRule"/>
</dbReference>
<dbReference type="GO" id="GO:0051536">
    <property type="term" value="F:iron-sulfur cluster binding"/>
    <property type="evidence" value="ECO:0007669"/>
    <property type="project" value="UniProtKB-KW"/>
</dbReference>
<dbReference type="GO" id="GO:0016151">
    <property type="term" value="F:nickel cation binding"/>
    <property type="evidence" value="ECO:0007669"/>
    <property type="project" value="UniProtKB-UniRule"/>
</dbReference>
<dbReference type="GO" id="GO:0006084">
    <property type="term" value="P:acetyl-CoA metabolic process"/>
    <property type="evidence" value="ECO:0007669"/>
    <property type="project" value="InterPro"/>
</dbReference>
<dbReference type="Gene3D" id="3.30.1650.10">
    <property type="entry name" value="Bifunctional carbon monoxide dehydrogenase/acetyl-coa synthase(codh/acs), Chain M, domain 3"/>
    <property type="match status" value="1"/>
</dbReference>
<dbReference type="Gene3D" id="3.40.1470.10">
    <property type="entry name" value="Bifunctional carbon monoxide dehydrogenase/acetyl-coa synthase(codh/acs), Chain M, domain 5"/>
    <property type="match status" value="1"/>
</dbReference>
<dbReference type="Gene3D" id="3.40.970.20">
    <property type="entry name" value="Carbon monoxide dehydrogenase alpha subunit. Chain D, domain 4"/>
    <property type="match status" value="1"/>
</dbReference>
<dbReference type="HAMAP" id="MF_01138">
    <property type="entry name" value="CdhC"/>
    <property type="match status" value="1"/>
</dbReference>
<dbReference type="InterPro" id="IPR045822">
    <property type="entry name" value="ACS_CODH_B_C"/>
</dbReference>
<dbReference type="InterPro" id="IPR004461">
    <property type="entry name" value="CO_DH/Ac-CoA_synth_bsu"/>
</dbReference>
<dbReference type="InterPro" id="IPR038571">
    <property type="entry name" value="CO_DH/Ac-CoA_synth_bsu_3_sf"/>
</dbReference>
<dbReference type="InterPro" id="IPR023432">
    <property type="entry name" value="CO_DH/Ac-CoA_synth_bsu_arc"/>
</dbReference>
<dbReference type="InterPro" id="IPR011254">
    <property type="entry name" value="Prismane-like_sf"/>
</dbReference>
<dbReference type="NCBIfam" id="TIGR00316">
    <property type="entry name" value="cdhC"/>
    <property type="match status" value="1"/>
</dbReference>
<dbReference type="NCBIfam" id="NF003379">
    <property type="entry name" value="PRK04456.1"/>
    <property type="match status" value="1"/>
</dbReference>
<dbReference type="PANTHER" id="PTHR42281">
    <property type="match status" value="1"/>
</dbReference>
<dbReference type="PANTHER" id="PTHR42281:SF1">
    <property type="entry name" value="ACETYL-COA DECARBONYLASE_SYNTHASE COMPLEX SUBUNIT BETA 1"/>
    <property type="match status" value="1"/>
</dbReference>
<dbReference type="Pfam" id="PF19436">
    <property type="entry name" value="ACS_CODH_B_C"/>
    <property type="match status" value="1"/>
</dbReference>
<dbReference type="Pfam" id="PF03598">
    <property type="entry name" value="CdhC"/>
    <property type="match status" value="1"/>
</dbReference>
<dbReference type="SUPFAM" id="SSF56821">
    <property type="entry name" value="Prismane protein-like"/>
    <property type="match status" value="1"/>
</dbReference>
<comment type="function">
    <text evidence="3">Part of a complex that catalyzes the reversible cleavage of acetyl-CoA, allowing autotrophic growth from CO(2). The alpha-epsilon complex generates CO from CO(2), while the beta subunit (this protein) combines the CO with CoA and a methyl group to form acetyl-CoA. The methyl group, which is incorporated into acetyl-CoA, is transferred to the beta subunit by a corrinoid iron-sulfur protein (the gamma-delta complex).</text>
</comment>
<comment type="catalytic activity">
    <reaction evidence="3">
        <text>Co(I)-[corrinoid Fe-S protein] + acetyl-CoA + H(+) = methyl-Co(III)-[corrinoid Fe-S protein] + CO + CoA</text>
        <dbReference type="Rhea" id="RHEA:45212"/>
        <dbReference type="Rhea" id="RHEA-COMP:11110"/>
        <dbReference type="Rhea" id="RHEA-COMP:11111"/>
        <dbReference type="ChEBI" id="CHEBI:15378"/>
        <dbReference type="ChEBI" id="CHEBI:17245"/>
        <dbReference type="ChEBI" id="CHEBI:57287"/>
        <dbReference type="ChEBI" id="CHEBI:57288"/>
        <dbReference type="ChEBI" id="CHEBI:85033"/>
        <dbReference type="ChEBI" id="CHEBI:85035"/>
        <dbReference type="EC" id="2.3.1.169"/>
    </reaction>
</comment>
<comment type="cofactor">
    <cofactor evidence="1">
        <name>[Ni-Fe-S] cluster</name>
        <dbReference type="ChEBI" id="CHEBI:60400"/>
    </cofactor>
    <text evidence="1">Binds 1 [Ni-Fe-S] cluster.</text>
</comment>
<comment type="subunit">
    <text evidence="4">Monomer. The ACDS complex is made up of alpha, epsilon, beta, gamma and delta chains with a probable stoichiometry of (alpha(2)epsilon(2))(4)-beta(8)-(gamma(1)delta(1))(8) (Potential).</text>
</comment>
<comment type="similarity">
    <text evidence="4">Belongs to the CdhC family.</text>
</comment>
<accession>Q57620</accession>
<feature type="chain" id="PRO_0000155102" description="Acetyl-CoA decarbonylase/synthase complex subunit beta 2">
    <location>
        <begin position="1"/>
        <end position="469"/>
    </location>
</feature>
<feature type="binding site" evidence="2">
    <location>
        <position position="187"/>
    </location>
    <ligand>
        <name>[Ni-Fe-S] cluster</name>
        <dbReference type="ChEBI" id="CHEBI:60400"/>
    </ligand>
</feature>
<feature type="binding site" evidence="2">
    <location>
        <position position="190"/>
    </location>
    <ligand>
        <name>[Ni-Fe-S] cluster</name>
        <dbReference type="ChEBI" id="CHEBI:60400"/>
    </ligand>
</feature>
<feature type="binding site" evidence="2">
    <location>
        <position position="276"/>
    </location>
    <ligand>
        <name>[Ni-Fe-S] cluster</name>
        <dbReference type="ChEBI" id="CHEBI:60400"/>
    </ligand>
</feature>
<feature type="binding site" evidence="2">
    <location>
        <position position="278"/>
    </location>
    <ligand>
        <name>[Ni-Fe-S] cluster</name>
        <dbReference type="ChEBI" id="CHEBI:60400"/>
    </ligand>
</feature>
<evidence type="ECO:0000250" key="1"/>
<evidence type="ECO:0000255" key="2"/>
<evidence type="ECO:0000255" key="3">
    <source>
        <dbReference type="HAMAP-Rule" id="MF_01138"/>
    </source>
</evidence>
<evidence type="ECO:0000305" key="4"/>
<keyword id="KW-0012">Acyltransferase</keyword>
<keyword id="KW-0408">Iron</keyword>
<keyword id="KW-0411">Iron-sulfur</keyword>
<keyword id="KW-0479">Metal-binding</keyword>
<keyword id="KW-0533">Nickel</keyword>
<keyword id="KW-1185">Reference proteome</keyword>
<keyword id="KW-0808">Transferase</keyword>
<sequence length="469" mass="52642">MFDDIPVSVGPMNEGERVRGPDMYVELAGPKSYGFELVKVVNKAEDKVEIIGKDIDEMEEGSRNPFAIIVEVSGSNLEEDLEGVLERRIHEFLNYIEGVMHLNQRDQVWIRINKDSFNKGLRLKHIGKVVQRLFKAEFPFIEKCDVTIITDPEKVKEELEKAREIYNKRDEKTKALHEEDVDVFYGCVMCQSFAPTHVCVITPDRPALCGGINYLDARAAAKIDPNGPIFEIPKGECLDEKLGIYSGVNEVVRERSQGTVEEVTLHSALEKPCTSCGCFEAIVFYIPEVDGFGIAHRGYKGETPMGIPFSTLAGQCSGGKQVPGFVGISISYMKSPKFLQGDGGWERVVWLPKELKERVKDAIPEELYDKIATEEDVKTTDELIKFLKEKGHPCAERIGAEVEEEAIEEEEVEEEMEEVEGIEVPTMTLPGTFAGLPPGIKIVLYNAVIKAEKIIITKEEPEKKKKKKK</sequence>
<reference key="1">
    <citation type="journal article" date="1996" name="Science">
        <title>Complete genome sequence of the methanogenic archaeon, Methanococcus jannaschii.</title>
        <authorList>
            <person name="Bult C.J."/>
            <person name="White O."/>
            <person name="Olsen G.J."/>
            <person name="Zhou L."/>
            <person name="Fleischmann R.D."/>
            <person name="Sutton G.G."/>
            <person name="Blake J.A."/>
            <person name="FitzGerald L.M."/>
            <person name="Clayton R.A."/>
            <person name="Gocayne J.D."/>
            <person name="Kerlavage A.R."/>
            <person name="Dougherty B.A."/>
            <person name="Tomb J.-F."/>
            <person name="Adams M.D."/>
            <person name="Reich C.I."/>
            <person name="Overbeek R."/>
            <person name="Kirkness E.F."/>
            <person name="Weinstock K.G."/>
            <person name="Merrick J.M."/>
            <person name="Glodek A."/>
            <person name="Scott J.L."/>
            <person name="Geoghagen N.S.M."/>
            <person name="Weidman J.F."/>
            <person name="Fuhrmann J.L."/>
            <person name="Nguyen D."/>
            <person name="Utterback T.R."/>
            <person name="Kelley J.M."/>
            <person name="Peterson J.D."/>
            <person name="Sadow P.W."/>
            <person name="Hanna M.C."/>
            <person name="Cotton M.D."/>
            <person name="Roberts K.M."/>
            <person name="Hurst M.A."/>
            <person name="Kaine B.P."/>
            <person name="Borodovsky M."/>
            <person name="Klenk H.-P."/>
            <person name="Fraser C.M."/>
            <person name="Smith H.O."/>
            <person name="Woese C.R."/>
            <person name="Venter J.C."/>
        </authorList>
    </citation>
    <scope>NUCLEOTIDE SEQUENCE [LARGE SCALE GENOMIC DNA]</scope>
    <source>
        <strain>ATCC 43067 / DSM 2661 / JAL-1 / JCM 10045 / NBRC 100440</strain>
    </source>
</reference>
<name>ACDB2_METJA</name>
<proteinExistence type="inferred from homology"/>
<organism>
    <name type="scientific">Methanocaldococcus jannaschii (strain ATCC 43067 / DSM 2661 / JAL-1 / JCM 10045 / NBRC 100440)</name>
    <name type="common">Methanococcus jannaschii</name>
    <dbReference type="NCBI Taxonomy" id="243232"/>
    <lineage>
        <taxon>Archaea</taxon>
        <taxon>Methanobacteriati</taxon>
        <taxon>Methanobacteriota</taxon>
        <taxon>Methanomada group</taxon>
        <taxon>Methanococci</taxon>
        <taxon>Methanococcales</taxon>
        <taxon>Methanocaldococcaceae</taxon>
        <taxon>Methanocaldococcus</taxon>
    </lineage>
</organism>
<gene>
    <name type="primary">cdhC2</name>
    <name type="ordered locus">MJ0156</name>
</gene>